<proteinExistence type="evidence at transcript level"/>
<keyword id="KW-1003">Cell membrane</keyword>
<keyword id="KW-0472">Membrane</keyword>
<keyword id="KW-1185">Reference proteome</keyword>
<keyword id="KW-0812">Transmembrane</keyword>
<keyword id="KW-1133">Transmembrane helix</keyword>
<accession>Q6NYN7</accession>
<organism>
    <name type="scientific">Danio rerio</name>
    <name type="common">Zebrafish</name>
    <name type="synonym">Brachydanio rerio</name>
    <dbReference type="NCBI Taxonomy" id="7955"/>
    <lineage>
        <taxon>Eukaryota</taxon>
        <taxon>Metazoa</taxon>
        <taxon>Chordata</taxon>
        <taxon>Craniata</taxon>
        <taxon>Vertebrata</taxon>
        <taxon>Euteleostomi</taxon>
        <taxon>Actinopterygii</taxon>
        <taxon>Neopterygii</taxon>
        <taxon>Teleostei</taxon>
        <taxon>Ostariophysi</taxon>
        <taxon>Cypriniformes</taxon>
        <taxon>Danionidae</taxon>
        <taxon>Danioninae</taxon>
        <taxon>Danio</taxon>
    </lineage>
</organism>
<protein>
    <recommendedName>
        <fullName>Solute carrier family 22 member 6</fullName>
    </recommendedName>
    <alternativeName>
        <fullName>Organic anion transporter 1</fullName>
    </alternativeName>
    <alternativeName>
        <fullName>Renal organic anion transporter 1</fullName>
        <shortName>ROAT1</shortName>
    </alternativeName>
</protein>
<feature type="chain" id="PRO_0000324173" description="Solute carrier family 22 member 6">
    <location>
        <begin position="1"/>
        <end position="560"/>
    </location>
</feature>
<feature type="topological domain" description="Cytoplasmic" evidence="4">
    <location>
        <begin position="1"/>
        <end position="15"/>
    </location>
</feature>
<feature type="transmembrane region" description="Helical" evidence="4">
    <location>
        <begin position="16"/>
        <end position="36"/>
    </location>
</feature>
<feature type="topological domain" description="Extracellular" evidence="4">
    <location>
        <begin position="37"/>
        <end position="143"/>
    </location>
</feature>
<feature type="transmembrane region" description="Helical" evidence="4">
    <location>
        <begin position="144"/>
        <end position="164"/>
    </location>
</feature>
<feature type="topological domain" description="Cytoplasmic" evidence="4">
    <location>
        <begin position="165"/>
        <end position="170"/>
    </location>
</feature>
<feature type="transmembrane region" description="Helical" evidence="4">
    <location>
        <begin position="171"/>
        <end position="191"/>
    </location>
</feature>
<feature type="topological domain" description="Extracellular" evidence="4">
    <location>
        <begin position="192"/>
        <end position="201"/>
    </location>
</feature>
<feature type="transmembrane region" description="Helical" evidence="4">
    <location>
        <begin position="202"/>
        <end position="222"/>
    </location>
</feature>
<feature type="topological domain" description="Cytoplasmic" evidence="4">
    <location>
        <begin position="223"/>
        <end position="228"/>
    </location>
</feature>
<feature type="transmembrane region" description="Helical" evidence="4">
    <location>
        <begin position="229"/>
        <end position="249"/>
    </location>
</feature>
<feature type="topological domain" description="Extracellular" evidence="4">
    <location>
        <begin position="250"/>
        <end position="256"/>
    </location>
</feature>
<feature type="transmembrane region" description="Helical" evidence="4">
    <location>
        <begin position="257"/>
        <end position="277"/>
    </location>
</feature>
<feature type="topological domain" description="Cytoplasmic" evidence="4">
    <location>
        <begin position="278"/>
        <end position="345"/>
    </location>
</feature>
<feature type="transmembrane region" description="Helical" evidence="4">
    <location>
        <begin position="346"/>
        <end position="366"/>
    </location>
</feature>
<feature type="topological domain" description="Extracellular" evidence="4">
    <location>
        <begin position="367"/>
        <end position="374"/>
    </location>
</feature>
<feature type="transmembrane region" description="Helical" evidence="4">
    <location>
        <begin position="375"/>
        <end position="395"/>
    </location>
</feature>
<feature type="topological domain" description="Cytoplasmic" evidence="4">
    <location>
        <begin position="396"/>
        <end position="406"/>
    </location>
</feature>
<feature type="transmembrane region" description="Helical" evidence="4">
    <location>
        <begin position="407"/>
        <end position="427"/>
    </location>
</feature>
<feature type="topological domain" description="Extracellular" evidence="4">
    <location>
        <begin position="428"/>
        <end position="433"/>
    </location>
</feature>
<feature type="transmembrane region" description="Helical" evidence="4">
    <location>
        <begin position="434"/>
        <end position="454"/>
    </location>
</feature>
<feature type="topological domain" description="Cytoplasmic" evidence="4">
    <location>
        <begin position="455"/>
        <end position="465"/>
    </location>
</feature>
<feature type="transmembrane region" description="Helical" evidence="4">
    <location>
        <begin position="466"/>
        <end position="486"/>
    </location>
</feature>
<feature type="topological domain" description="Extracellular" evidence="4">
    <location>
        <begin position="487"/>
        <end position="491"/>
    </location>
</feature>
<feature type="transmembrane region" description="Helical" evidence="4">
    <location>
        <begin position="492"/>
        <end position="512"/>
    </location>
</feature>
<feature type="topological domain" description="Cytoplasmic" evidence="4">
    <location>
        <begin position="513"/>
        <end position="560"/>
    </location>
</feature>
<evidence type="ECO:0000250" key="1"/>
<evidence type="ECO:0000250" key="2">
    <source>
        <dbReference type="UniProtKB" id="Q4U2R8"/>
    </source>
</evidence>
<evidence type="ECO:0000250" key="3">
    <source>
        <dbReference type="UniProtKB" id="Q8VC69"/>
    </source>
</evidence>
<evidence type="ECO:0000255" key="4"/>
<evidence type="ECO:0000305" key="5"/>
<gene>
    <name type="primary">slc22a6</name>
    <name type="synonym">oat</name>
    <name type="ORF">zgc:77073</name>
</gene>
<dbReference type="EMBL" id="BC066519">
    <property type="protein sequence ID" value="AAH66519.1"/>
    <property type="molecule type" value="mRNA"/>
</dbReference>
<dbReference type="SMR" id="Q6NYN7"/>
<dbReference type="FunCoup" id="Q6NYN7">
    <property type="interactions" value="49"/>
</dbReference>
<dbReference type="STRING" id="7955.ENSDARP00000072353"/>
<dbReference type="PaxDb" id="7955-ENSDARP00000072353"/>
<dbReference type="AGR" id="ZFIN:ZDB-GENE-040426-2249"/>
<dbReference type="ZFIN" id="ZDB-GENE-040426-2249">
    <property type="gene designation" value="slc22a6l"/>
</dbReference>
<dbReference type="eggNOG" id="KOG0255">
    <property type="taxonomic scope" value="Eukaryota"/>
</dbReference>
<dbReference type="InParanoid" id="Q6NYN7"/>
<dbReference type="PhylomeDB" id="Q6NYN7"/>
<dbReference type="Reactome" id="R-DRE-561048">
    <property type="pathway name" value="Organic anion transport"/>
</dbReference>
<dbReference type="PRO" id="PR:Q6NYN7"/>
<dbReference type="Proteomes" id="UP000000437">
    <property type="component" value="Unplaced"/>
</dbReference>
<dbReference type="GO" id="GO:0009925">
    <property type="term" value="C:basal plasma membrane"/>
    <property type="evidence" value="ECO:0000250"/>
    <property type="project" value="UniProtKB"/>
</dbReference>
<dbReference type="GO" id="GO:0016323">
    <property type="term" value="C:basolateral plasma membrane"/>
    <property type="evidence" value="ECO:0007669"/>
    <property type="project" value="UniProtKB-SubCell"/>
</dbReference>
<dbReference type="GO" id="GO:0005886">
    <property type="term" value="C:plasma membrane"/>
    <property type="evidence" value="ECO:0000314"/>
    <property type="project" value="ZFIN"/>
</dbReference>
<dbReference type="GO" id="GO:0008514">
    <property type="term" value="F:organic anion transmembrane transporter activity"/>
    <property type="evidence" value="ECO:0000314"/>
    <property type="project" value="ZFIN"/>
</dbReference>
<dbReference type="CDD" id="cd17446">
    <property type="entry name" value="MFS_SLC22A6_OAT1_like"/>
    <property type="match status" value="1"/>
</dbReference>
<dbReference type="FunFam" id="1.20.1250.20:FF:000023">
    <property type="entry name" value="Solute carrier family 22 member 6"/>
    <property type="match status" value="1"/>
</dbReference>
<dbReference type="Gene3D" id="1.20.1250.20">
    <property type="entry name" value="MFS general substrate transporter like domains"/>
    <property type="match status" value="1"/>
</dbReference>
<dbReference type="InterPro" id="IPR020846">
    <property type="entry name" value="MFS_dom"/>
</dbReference>
<dbReference type="InterPro" id="IPR005828">
    <property type="entry name" value="MFS_sugar_transport-like"/>
</dbReference>
<dbReference type="InterPro" id="IPR036259">
    <property type="entry name" value="MFS_trans_sf"/>
</dbReference>
<dbReference type="PANTHER" id="PTHR24064">
    <property type="entry name" value="SOLUTE CARRIER FAMILY 22 MEMBER"/>
    <property type="match status" value="1"/>
</dbReference>
<dbReference type="Pfam" id="PF00083">
    <property type="entry name" value="Sugar_tr"/>
    <property type="match status" value="1"/>
</dbReference>
<dbReference type="SUPFAM" id="SSF103473">
    <property type="entry name" value="MFS general substrate transporter"/>
    <property type="match status" value="1"/>
</dbReference>
<dbReference type="PROSITE" id="PS50850">
    <property type="entry name" value="MFS"/>
    <property type="match status" value="1"/>
</dbReference>
<reference key="1">
    <citation type="submission" date="2004-02" db="EMBL/GenBank/DDBJ databases">
        <authorList>
            <consortium name="NIH - Zebrafish Gene Collection (ZGC) project"/>
        </authorList>
    </citation>
    <scope>NUCLEOTIDE SEQUENCE [LARGE SCALE MRNA]</scope>
    <source>
        <tissue>Kidney</tissue>
    </source>
</reference>
<comment type="function">
    <text evidence="1">Involved in the renal elimination of endogenous and exogenous organic anions. Functions as organic anion exchanger when the uptake of one molecule of organic anion is coupled with an efflux of one molecule of endogenous dicarboxylic acid (glutarate, ketoglutarate, etc). Mediates the sodium-independent uptake of p-aminohippurate (PAH), 2,3-dimercapto-1-propanesulfonic acid (DMPS), cidofovir, adefovir, 9-(2-phosphonylmethoxyethyl) guanine (PMEG), 9-(2-phosphonylmethoxyethyl) diaminopurine (PMEDAP), ochratoxin (OTA), acyclovir (ACV), 3'-azido-3-'deoxythymidine (AZT), cimetidine (CMD), 2,4-dichloro-phenoxyacetate (2,4-D), hippurate (HA), indoleacetate (IA), indoxyl sulfate (IS) and 3-carboxy-4-methyl-5-propyl-2-furanpropionate (CMPF) and edaravone sulfate. PAH uptake is inhibited by p-chloromercuribenzenesulphonate (PCMBS), diethyl pyrocarbonate (DEPC), indomethacin, sulindac, diclofenac, carprofen, okadaic acid, benzothiazolylcysteine (BTC), S-chlorotrifluoroethylcysteine (CTFC), cysteine S-conjugates S-dichlorovinylcysteine (DCVC), furosemide, steviol, phorbol 12-myristate 13-acetate (PMA), calcium ionophore A23187, benzylpenicillin, bumetamide, losartan, probenecid, phenol red, urate, glutarate and alpha-ketoglutarate (By similarity).</text>
</comment>
<comment type="subcellular location">
    <subcellularLocation>
        <location evidence="3">Cell membrane</location>
        <topology evidence="3">Multi-pass membrane protein</topology>
    </subcellularLocation>
    <subcellularLocation>
        <location evidence="2">Basolateral cell membrane</location>
        <topology evidence="5">Multi-pass membrane protein</topology>
    </subcellularLocation>
    <subcellularLocation>
        <location evidence="2">Basal cell membrane</location>
        <topology evidence="5">Multi-pass membrane protein</topology>
    </subcellularLocation>
</comment>
<comment type="domain">
    <text evidence="1">Multiple cysteine residues are necessary for proper targeting to the plasma membrane.</text>
</comment>
<comment type="PTM">
    <text evidence="1">Glycosylated. Glycosylation is necessary for proper targeting of the transporter to the plasma membrane (By similarity).</text>
</comment>
<comment type="similarity">
    <text evidence="5">Belongs to the major facilitator (TC 2.A.1) superfamily. Organic cation transporter (TC 2.A.1.19) family.</text>
</comment>
<name>S22A6_DANRE</name>
<sequence>MAFSDLLEQVGSTGRFQVLHVTLLSMPILMMASHNLLQNFVAAVPPHHCQPHANLSMSSTDAVDVLRATVPLGLNGKLERCKRYTTPQWQILSLNTSESLWDESMAETETQSCEDGWFYNMTEMSSTIITEWDLVCDYRALKQMSQTTYMGGVLVGAIVFGGLSDRFGRRVLLLISNLMMAIGGTCVAFSTSFTMFCVFRVCCGMALSGLVLNSFSLIVEWIPTRVRTVVGTGTGYCYTTGQLILAAVAYCIRDWRWLTLAVSLPFYVSFLYSWWFLESARWLVLTKNPEQAVKNLKTVARINGRSAEGDKIDLEMLQESMKKEMACSKGSYSALDLLRTSTMRTITICLSAVWFSTSFAYYGLSMDLQKFGVSIYLIQIIFGAVDIPAKIIVTICMSMLGRRPSQCGALVLAGIMILINLLVPSDLQMLRTSLAVIGKGCLAASFNCCYLYAGELYPTVIRQSGMGWVSMMARFGAMVAPMVLLLGDDYPWIPGFIYGGAPIVSGIFAFFLPETLSQPLPDTIQDIDDRGLARTNSKRLPEKLDLAMKDPSCVLLKESV</sequence>